<protein>
    <recommendedName>
        <fullName>Leucine-rich repeat transmembrane neuronal protein 2</fullName>
    </recommendedName>
    <alternativeName>
        <fullName>Leucine-rich repeat neuronal 2 protein</fullName>
    </alternativeName>
</protein>
<proteinExistence type="evidence at protein level"/>
<name>LRRT2_RAT</name>
<evidence type="ECO:0000255" key="1"/>
<evidence type="ECO:0000269" key="2">
    <source>
    </source>
</evidence>
<evidence type="ECO:0000269" key="3">
    <source>
    </source>
</evidence>
<evidence type="ECO:0000269" key="4">
    <source>
    </source>
</evidence>
<evidence type="ECO:0000305" key="5"/>
<sequence>MGLHFKWPLGAPMLAAIYAMSVVLKMLPALGMACPPKCRCEKLLFYCDSQGFHSVPNATDKGSLGLSLRHNHITALERDQFASFSQLTWLHLDHNQISTVKEDAFQGLYKLKELILSSNKIFYLPNTTFTQLINLQNLDLSFNQLSSLHPELFYGLRKLQTLHLRSNSLRTIPVRLFWDCRSLEFLDLSTNRLRSLARNGFAGLIKLRELHLEHNQLTKINFAHFLRLSSLHTLFLQWNKISNLTCGMEWTWSTLEKLDLTGNEIKAIDLTVFETMPNLKILLMDNNKLNSLDSKILSSLRSLTTVGLSGNLWECSPRVCALASWLGSFQGRWEHSILCHSPDHTQGEDILDAVHGFQLCWNLSTTVTAMATTYRDPTTEYTKISSSSYHVGDKEIPTTAGIAVTTEEHFPEPDNAIFTQRVITGTMALLFSFFFIIFIVFISRKCCPPTLRRIRQCSMIQNHRQLRSQTRLHMSNMSDQGPYSEYEPTHEGPFIIINGYGQCKCQQLPYKECEV</sequence>
<comment type="function">
    <text evidence="2 3 4">Involved in the development and maintenance of excitatory synapses in the nervous system. Regulates surface expression of AMPA receptors and instructs the development of functional glutamate release sites. Acts as a ligand for the presynaptic receptors NRXN1-A and NRXN1-B.</text>
</comment>
<comment type="subunit">
    <text evidence="2 3 4">Interacts with DLG4 (PubMed:19285470, PubMed:20064388). Interacts with neurexin NRXN1; interaction is mediated by heparan sulfate glycan modification on neurexin (PubMed:20064388, PubMed:30100184).</text>
</comment>
<comment type="subcellular location">
    <subcellularLocation>
        <location>Cell membrane</location>
        <topology>Single-pass type I membrane protein</topology>
    </subcellularLocation>
    <subcellularLocation>
        <location>Postsynaptic cell membrane</location>
        <topology>Single-pass type I membrane protein</topology>
    </subcellularLocation>
    <text>Localized to excitatory synapses.</text>
</comment>
<comment type="tissue specificity">
    <text evidence="2">Expressed in neuronal tissues. Widely distributed in neuropil regions in discrete puncta throughout the brain (at protein level). Detected in cortex, thalamus, striatum, olfactory bulb, cerebellum and all hippocampal subfields (at protein level). More abundant in deep than in superficial layers of neocortex (at protein level).</text>
</comment>
<comment type="domain">
    <text>Synaptogenic effects are mediated by the extracellular LRR region.</text>
</comment>
<comment type="similarity">
    <text evidence="5">Belongs to the LRRTM family.</text>
</comment>
<accession>D4A7P2</accession>
<organism>
    <name type="scientific">Rattus norvegicus</name>
    <name type="common">Rat</name>
    <dbReference type="NCBI Taxonomy" id="10116"/>
    <lineage>
        <taxon>Eukaryota</taxon>
        <taxon>Metazoa</taxon>
        <taxon>Chordata</taxon>
        <taxon>Craniata</taxon>
        <taxon>Vertebrata</taxon>
        <taxon>Euteleostomi</taxon>
        <taxon>Mammalia</taxon>
        <taxon>Eutheria</taxon>
        <taxon>Euarchontoglires</taxon>
        <taxon>Glires</taxon>
        <taxon>Rodentia</taxon>
        <taxon>Myomorpha</taxon>
        <taxon>Muroidea</taxon>
        <taxon>Muridae</taxon>
        <taxon>Murinae</taxon>
        <taxon>Rattus</taxon>
    </lineage>
</organism>
<dbReference type="EMBL" id="CH473974">
    <property type="protein sequence ID" value="EDL76254.1"/>
    <property type="molecule type" value="Genomic_DNA"/>
</dbReference>
<dbReference type="RefSeq" id="NP_001102939.1">
    <property type="nucleotide sequence ID" value="NM_001109469.1"/>
</dbReference>
<dbReference type="SMR" id="D4A7P2"/>
<dbReference type="FunCoup" id="D4A7P2">
    <property type="interactions" value="330"/>
</dbReference>
<dbReference type="STRING" id="10116.ENSRNOP00000067172"/>
<dbReference type="GlyCosmos" id="D4A7P2">
    <property type="glycosylation" value="4 sites, No reported glycans"/>
</dbReference>
<dbReference type="GlyGen" id="D4A7P2">
    <property type="glycosylation" value="4 sites"/>
</dbReference>
<dbReference type="iPTMnet" id="D4A7P2"/>
<dbReference type="PhosphoSitePlus" id="D4A7P2"/>
<dbReference type="PaxDb" id="10116-ENSRNOP00000067172"/>
<dbReference type="ABCD" id="D4A7P2">
    <property type="antibodies" value="1 sequenced antibody"/>
</dbReference>
<dbReference type="Ensembl" id="ENSRNOT00000075420.3">
    <property type="protein sequence ID" value="ENSRNOP00000067172.2"/>
    <property type="gene ID" value="ENSRNOG00000047085.3"/>
</dbReference>
<dbReference type="GeneID" id="685472"/>
<dbReference type="KEGG" id="rno:685472"/>
<dbReference type="UCSC" id="RGD:1593785">
    <property type="organism name" value="rat"/>
</dbReference>
<dbReference type="AGR" id="RGD:1593785"/>
<dbReference type="CTD" id="26045"/>
<dbReference type="RGD" id="1593785">
    <property type="gene designation" value="Lrrtm2"/>
</dbReference>
<dbReference type="eggNOG" id="KOG0619">
    <property type="taxonomic scope" value="Eukaryota"/>
</dbReference>
<dbReference type="GeneTree" id="ENSGT00940000160581"/>
<dbReference type="HOGENOM" id="CLU_032965_0_0_1"/>
<dbReference type="InParanoid" id="D4A7P2"/>
<dbReference type="OMA" id="WPLGARM"/>
<dbReference type="OrthoDB" id="2325980at2759"/>
<dbReference type="PhylomeDB" id="D4A7P2"/>
<dbReference type="TreeFam" id="TF332659"/>
<dbReference type="Reactome" id="R-RNO-6794361">
    <property type="pathway name" value="Neurexins and neuroligins"/>
</dbReference>
<dbReference type="PRO" id="PR:D4A7P2"/>
<dbReference type="Proteomes" id="UP000002494">
    <property type="component" value="Chromosome 18"/>
</dbReference>
<dbReference type="Proteomes" id="UP000234681">
    <property type="component" value="Chromosome 18"/>
</dbReference>
<dbReference type="Bgee" id="ENSRNOG00000047085">
    <property type="expression patterns" value="Expressed in brain and 4 other cell types or tissues"/>
</dbReference>
<dbReference type="GO" id="GO:0060076">
    <property type="term" value="C:excitatory synapse"/>
    <property type="evidence" value="ECO:0000314"/>
    <property type="project" value="MGI"/>
</dbReference>
<dbReference type="GO" id="GO:0005615">
    <property type="term" value="C:extracellular space"/>
    <property type="evidence" value="ECO:0000318"/>
    <property type="project" value="GO_Central"/>
</dbReference>
<dbReference type="GO" id="GO:0098982">
    <property type="term" value="C:GABA-ergic synapse"/>
    <property type="evidence" value="ECO:0000266"/>
    <property type="project" value="RGD"/>
</dbReference>
<dbReference type="GO" id="GO:0098978">
    <property type="term" value="C:glutamatergic synapse"/>
    <property type="evidence" value="ECO:0000314"/>
    <property type="project" value="SynGO"/>
</dbReference>
<dbReference type="GO" id="GO:0098686">
    <property type="term" value="C:hippocampal mossy fiber to CA3 synapse"/>
    <property type="evidence" value="ECO:0000314"/>
    <property type="project" value="SynGO"/>
</dbReference>
<dbReference type="GO" id="GO:0098839">
    <property type="term" value="C:postsynaptic density membrane"/>
    <property type="evidence" value="ECO:0000314"/>
    <property type="project" value="SynGO"/>
</dbReference>
<dbReference type="GO" id="GO:0099634">
    <property type="term" value="C:postsynaptic specialization membrane"/>
    <property type="evidence" value="ECO:0000266"/>
    <property type="project" value="RGD"/>
</dbReference>
<dbReference type="GO" id="GO:0098685">
    <property type="term" value="C:Schaffer collateral - CA1 synapse"/>
    <property type="evidence" value="ECO:0000314"/>
    <property type="project" value="SynGO"/>
</dbReference>
<dbReference type="GO" id="GO:0042043">
    <property type="term" value="F:neurexin family protein binding"/>
    <property type="evidence" value="ECO:0000353"/>
    <property type="project" value="BHF-UCL"/>
</dbReference>
<dbReference type="GO" id="GO:0060291">
    <property type="term" value="P:long-term synaptic potentiation"/>
    <property type="evidence" value="ECO:0000266"/>
    <property type="project" value="RGD"/>
</dbReference>
<dbReference type="GO" id="GO:0002091">
    <property type="term" value="P:negative regulation of receptor internalization"/>
    <property type="evidence" value="ECO:0000266"/>
    <property type="project" value="RGD"/>
</dbReference>
<dbReference type="GO" id="GO:0051965">
    <property type="term" value="P:positive regulation of synapse assembly"/>
    <property type="evidence" value="ECO:0000266"/>
    <property type="project" value="RGD"/>
</dbReference>
<dbReference type="GO" id="GO:0099151">
    <property type="term" value="P:regulation of postsynaptic density assembly"/>
    <property type="evidence" value="ECO:0000314"/>
    <property type="project" value="SynGO"/>
</dbReference>
<dbReference type="GO" id="GO:0050808">
    <property type="term" value="P:synapse organization"/>
    <property type="evidence" value="ECO:0000314"/>
    <property type="project" value="MGI"/>
</dbReference>
<dbReference type="FunFam" id="3.80.10.10:FF:000005">
    <property type="entry name" value="leucine-rich repeat transmembrane neuronal protein 4"/>
    <property type="match status" value="1"/>
</dbReference>
<dbReference type="Gene3D" id="3.80.10.10">
    <property type="entry name" value="Ribonuclease Inhibitor"/>
    <property type="match status" value="1"/>
</dbReference>
<dbReference type="InterPro" id="IPR001611">
    <property type="entry name" value="Leu-rich_rpt"/>
</dbReference>
<dbReference type="InterPro" id="IPR003591">
    <property type="entry name" value="Leu-rich_rpt_typical-subtyp"/>
</dbReference>
<dbReference type="InterPro" id="IPR050467">
    <property type="entry name" value="LRFN"/>
</dbReference>
<dbReference type="InterPro" id="IPR032675">
    <property type="entry name" value="LRR_dom_sf"/>
</dbReference>
<dbReference type="PANTHER" id="PTHR45842:SF22">
    <property type="entry name" value="INSULIN-LIKE GROWTH FACTOR-BINDING PROTEIN COMPLEX ACID LABILE SUBUNIT ISOFORM X1"/>
    <property type="match status" value="1"/>
</dbReference>
<dbReference type="PANTHER" id="PTHR45842">
    <property type="entry name" value="SYNAPTIC ADHESION-LIKE MOLECULE SALM"/>
    <property type="match status" value="1"/>
</dbReference>
<dbReference type="Pfam" id="PF13855">
    <property type="entry name" value="LRR_8"/>
    <property type="match status" value="3"/>
</dbReference>
<dbReference type="PRINTS" id="PR00019">
    <property type="entry name" value="LEURICHRPT"/>
</dbReference>
<dbReference type="SMART" id="SM00369">
    <property type="entry name" value="LRR_TYP"/>
    <property type="match status" value="9"/>
</dbReference>
<dbReference type="SUPFAM" id="SSF52058">
    <property type="entry name" value="L domain-like"/>
    <property type="match status" value="1"/>
</dbReference>
<dbReference type="PROSITE" id="PS51450">
    <property type="entry name" value="LRR"/>
    <property type="match status" value="10"/>
</dbReference>
<keyword id="KW-1003">Cell membrane</keyword>
<keyword id="KW-0325">Glycoprotein</keyword>
<keyword id="KW-0433">Leucine-rich repeat</keyword>
<keyword id="KW-0472">Membrane</keyword>
<keyword id="KW-0628">Postsynaptic cell membrane</keyword>
<keyword id="KW-1185">Reference proteome</keyword>
<keyword id="KW-0677">Repeat</keyword>
<keyword id="KW-0732">Signal</keyword>
<keyword id="KW-0770">Synapse</keyword>
<keyword id="KW-0812">Transmembrane</keyword>
<keyword id="KW-1133">Transmembrane helix</keyword>
<gene>
    <name type="primary">Lrrtm2</name>
</gene>
<feature type="signal peptide" evidence="1">
    <location>
        <begin position="1"/>
        <end position="33"/>
    </location>
</feature>
<feature type="chain" id="PRO_0000405434" description="Leucine-rich repeat transmembrane neuronal protein 2">
    <location>
        <begin position="34"/>
        <end position="515"/>
    </location>
</feature>
<feature type="topological domain" description="Extracellular" evidence="1">
    <location>
        <begin position="34"/>
        <end position="421"/>
    </location>
</feature>
<feature type="transmembrane region" description="Helical" evidence="1">
    <location>
        <begin position="422"/>
        <end position="442"/>
    </location>
</feature>
<feature type="topological domain" description="Cytoplasmic" evidence="1">
    <location>
        <begin position="443"/>
        <end position="515"/>
    </location>
</feature>
<feature type="repeat" description="LRR 1">
    <location>
        <begin position="61"/>
        <end position="83"/>
    </location>
</feature>
<feature type="repeat" description="LRR 2">
    <location>
        <begin position="84"/>
        <end position="107"/>
    </location>
</feature>
<feature type="repeat" description="LRR 3">
    <location>
        <begin position="109"/>
        <end position="131"/>
    </location>
</feature>
<feature type="repeat" description="LRR 4">
    <location>
        <begin position="132"/>
        <end position="155"/>
    </location>
</feature>
<feature type="repeat" description="LRR 5">
    <location>
        <begin position="156"/>
        <end position="179"/>
    </location>
</feature>
<feature type="repeat" description="LRR 6">
    <location>
        <begin position="181"/>
        <end position="203"/>
    </location>
</feature>
<feature type="repeat" description="LRR 7">
    <location>
        <begin position="205"/>
        <end position="227"/>
    </location>
</feature>
<feature type="repeat" description="LRR 8">
    <location>
        <begin position="229"/>
        <end position="251"/>
    </location>
</feature>
<feature type="repeat" description="LRR 9">
    <location>
        <begin position="252"/>
        <end position="275"/>
    </location>
</feature>
<feature type="repeat" description="LRR 10">
    <location>
        <begin position="276"/>
        <end position="299"/>
    </location>
</feature>
<feature type="short sequence motif" description="Involved in DLG4-binding">
    <location>
        <begin position="512"/>
        <end position="515"/>
    </location>
</feature>
<feature type="glycosylation site" description="N-linked (GlcNAc...) asparagine" evidence="1">
    <location>
        <position position="57"/>
    </location>
</feature>
<feature type="glycosylation site" description="N-linked (GlcNAc...) asparagine" evidence="1">
    <location>
        <position position="126"/>
    </location>
</feature>
<feature type="glycosylation site" description="N-linked (GlcNAc...) asparagine" evidence="1">
    <location>
        <position position="243"/>
    </location>
</feature>
<feature type="glycosylation site" description="N-linked (GlcNAc...) asparagine" evidence="1">
    <location>
        <position position="362"/>
    </location>
</feature>
<feature type="mutagenesis site" description="Reduced heparan sulfate binding and reduced induction of presynaptic differentiation; when associated with A-181, A-206 and A-208." evidence="4">
    <original>RK</original>
    <variation>AA</variation>
    <location>
        <begin position="157"/>
        <end position="158"/>
    </location>
</feature>
<feature type="mutagenesis site" description="Reduced heparan sulfate binding and reduced induction of presynaptic differentiation; when associated with 157-A-A-158, A-206 and A-208." evidence="4">
    <original>R</original>
    <variation>A</variation>
    <location>
        <position position="181"/>
    </location>
</feature>
<feature type="mutagenesis site" description="Reduced heparan sulfate binding and reduced induction of presynaptic differentiation; when associated with 157-A-A-158, A-181 and A-208." evidence="4">
    <original>K</original>
    <variation>A</variation>
    <location>
        <position position="206"/>
    </location>
</feature>
<feature type="mutagenesis site" description="Reduced heparan sulfate binding and reduced induction of presynaptic differentiation; when associated with 157-A-A-158; A-181 and A-206." evidence="4">
    <original>R</original>
    <variation>A</variation>
    <location>
        <position position="208"/>
    </location>
</feature>
<feature type="mutagenesis site" description="Loss of DLG4-binding." evidence="2">
    <location>
        <begin position="512"/>
        <end position="515"/>
    </location>
</feature>
<reference key="1">
    <citation type="submission" date="2005-07" db="EMBL/GenBank/DDBJ databases">
        <authorList>
            <person name="Mural R.J."/>
            <person name="Adams M.D."/>
            <person name="Myers E.W."/>
            <person name="Smith H.O."/>
            <person name="Venter J.C."/>
        </authorList>
    </citation>
    <scope>NUCLEOTIDE SEQUENCE [LARGE SCALE GENOMIC DNA]</scope>
    <source>
        <strain>Brown Norway</strain>
    </source>
</reference>
<reference key="2">
    <citation type="journal article" date="2009" name="Neuron">
        <title>An unbiased expression screen for synaptogenic proteins identifies the LRRTM protein family as synaptic organizers.</title>
        <authorList>
            <person name="Linhoff M.W."/>
            <person name="Lauren J."/>
            <person name="Cassidy R.M."/>
            <person name="Dobie F.A."/>
            <person name="Takahashi H."/>
            <person name="Nygaard H.B."/>
            <person name="Airaksinen M.S."/>
            <person name="Strittmatter S.M."/>
            <person name="Craig A.M."/>
        </authorList>
    </citation>
    <scope>FUNCTION</scope>
    <scope>INTERACTION WITH DLG4</scope>
    <scope>SUBCELLULAR LOCATION</scope>
    <scope>TISSUE SPECIFICITY</scope>
    <scope>MUTAGENESIS OF 512-GLU--VAL-515</scope>
</reference>
<reference key="3">
    <citation type="journal article" date="2009" name="Neuron">
        <title>LRRTM2 interacts with Neurexin1 and regulates excitatory synapse formation.</title>
        <authorList>
            <person name="de Wit J."/>
            <person name="Sylwestrak E."/>
            <person name="O'Sullivan M.L."/>
            <person name="Otto S."/>
            <person name="Tiglio K."/>
            <person name="Savas J.N."/>
            <person name="Yates J.R. III"/>
            <person name="Comoletti D."/>
            <person name="Taylor P."/>
            <person name="Ghosh A."/>
        </authorList>
    </citation>
    <scope>FUNCTION</scope>
    <scope>SUBCELLULAR LOCATION</scope>
    <scope>INTERACTION WITH DLG4 AND NRXN1</scope>
</reference>
<reference key="4">
    <citation type="journal article" date="2018" name="Cell">
        <title>Heparan Sulfate Organizes Neuronal Synapses through Neurexin Partnerships.</title>
        <authorList>
            <person name="Zhang P."/>
            <person name="Lu H."/>
            <person name="Peixoto R.T."/>
            <person name="Pines M.K."/>
            <person name="Ge Y."/>
            <person name="Oku S."/>
            <person name="Siddiqui T.J."/>
            <person name="Xie Y."/>
            <person name="Wu W."/>
            <person name="Archer-Hartmann S."/>
            <person name="Yoshida K."/>
            <person name="Tanaka K.F."/>
            <person name="Aricescu A.R."/>
            <person name="Azadi P."/>
            <person name="Gordon M.D."/>
            <person name="Sabatini B.L."/>
            <person name="Wong R.O.L."/>
            <person name="Craig A.M."/>
        </authorList>
    </citation>
    <scope>FUNCTION</scope>
    <scope>INTERACTION WITH NEUREXIN</scope>
    <scope>MUTAGENESIS OF 157-ARG-LYS-158; ARG-181; LYS-206 AND ARG-208</scope>
</reference>